<protein>
    <recommendedName>
        <fullName evidence="1">Membrane-bound lytic murein transglycosylase F</fullName>
        <ecNumber evidence="1">4.2.2.n1</ecNumber>
    </recommendedName>
    <alternativeName>
        <fullName evidence="1">Murein lyase F</fullName>
    </alternativeName>
</protein>
<feature type="signal peptide" evidence="1">
    <location>
        <begin position="1"/>
        <end position="29"/>
    </location>
</feature>
<feature type="chain" id="PRO_0000353961" description="Membrane-bound lytic murein transglycosylase F">
    <location>
        <begin position="30"/>
        <end position="485"/>
    </location>
</feature>
<feature type="region of interest" description="Non-LT domain" evidence="1">
    <location>
        <begin position="30"/>
        <end position="267"/>
    </location>
</feature>
<feature type="region of interest" description="LT domain" evidence="1">
    <location>
        <begin position="268"/>
        <end position="485"/>
    </location>
</feature>
<feature type="region of interest" description="Disordered" evidence="2">
    <location>
        <begin position="465"/>
        <end position="485"/>
    </location>
</feature>
<feature type="compositionally biased region" description="Basic and acidic residues" evidence="2">
    <location>
        <begin position="474"/>
        <end position="485"/>
    </location>
</feature>
<feature type="active site" evidence="1">
    <location>
        <position position="314"/>
    </location>
</feature>
<gene>
    <name evidence="1" type="primary">mltF</name>
    <name type="ordered locus">Pput_1077</name>
</gene>
<sequence length="485" mass="54990">MFAHTALRQRCAKWLLATGLFLLLGACVEKPSTLERVKEDGVLRVITRNSPATYFQDRNGETGFEYELVQHFADDLGVKLQIETADNLDELYDALGKPSGPVLAAAGLVSSERRKTQVKYSHPYLEVTPQVIYRNGRARPTGAKGLVGKKIMVLKGSSHADQLAELKKQYPALQYEESDAVEVVDLLRMVDEGQIDLTLVDSNELAMNQVYFPNVRVAFDLGDTRDQRWAVAAGEDNSLLNEINEFLDKAQKNGTLQRLKDRYYGHVDVLGYVGAYTFAQHLQQRLPKYEKHFKSYAKVEQVDWRLLAAIGYQESMWQPEVTSKTGVRGLMMLTQRTAQAMGVSNRLDPRQSIQGGAKYFMKIKEELDDSIQEPDRTWFALAAYNVGSGHLEDARTLAKREKLNPNKWLDVKKMLPRLAQKQWYRQTKYGYARGGEPVHFVANIRRYYDILTWVTQPQLEGQVAEGNLHVPGVNKDKPADKSSPM</sequence>
<keyword id="KW-0998">Cell outer membrane</keyword>
<keyword id="KW-0961">Cell wall biogenesis/degradation</keyword>
<keyword id="KW-0456">Lyase</keyword>
<keyword id="KW-0472">Membrane</keyword>
<keyword id="KW-0732">Signal</keyword>
<reference key="1">
    <citation type="submission" date="2007-05" db="EMBL/GenBank/DDBJ databases">
        <title>Complete sequence of Pseudomonas putida F1.</title>
        <authorList>
            <consortium name="US DOE Joint Genome Institute"/>
            <person name="Copeland A."/>
            <person name="Lucas S."/>
            <person name="Lapidus A."/>
            <person name="Barry K."/>
            <person name="Detter J.C."/>
            <person name="Glavina del Rio T."/>
            <person name="Hammon N."/>
            <person name="Israni S."/>
            <person name="Dalin E."/>
            <person name="Tice H."/>
            <person name="Pitluck S."/>
            <person name="Chain P."/>
            <person name="Malfatti S."/>
            <person name="Shin M."/>
            <person name="Vergez L."/>
            <person name="Schmutz J."/>
            <person name="Larimer F."/>
            <person name="Land M."/>
            <person name="Hauser L."/>
            <person name="Kyrpides N."/>
            <person name="Lykidis A."/>
            <person name="Parales R."/>
            <person name="Richardson P."/>
        </authorList>
    </citation>
    <scope>NUCLEOTIDE SEQUENCE [LARGE SCALE GENOMIC DNA]</scope>
    <source>
        <strain>ATCC 700007 / DSM 6899 / JCM 31910 / BCRC 17059 / LMG 24140 / F1</strain>
    </source>
</reference>
<name>MLTF_PSEP1</name>
<accession>A5VZC8</accession>
<comment type="function">
    <text evidence="1">Murein-degrading enzyme that degrades murein glycan strands and insoluble, high-molecular weight murein sacculi, with the concomitant formation of a 1,6-anhydromuramoyl product. Lytic transglycosylases (LTs) play an integral role in the metabolism of the peptidoglycan (PG) sacculus. Their lytic action creates space within the PG sacculus to allow for its expansion as well as for the insertion of various structures such as secretion systems and flagella.</text>
</comment>
<comment type="catalytic activity">
    <reaction evidence="1">
        <text>Exolytic cleavage of the (1-&gt;4)-beta-glycosidic linkage between N-acetylmuramic acid (MurNAc) and N-acetylglucosamine (GlcNAc) residues in peptidoglycan, from either the reducing or the non-reducing ends of the peptidoglycan chains, with concomitant formation of a 1,6-anhydrobond in the MurNAc residue.</text>
        <dbReference type="EC" id="4.2.2.n1"/>
    </reaction>
</comment>
<comment type="subcellular location">
    <subcellularLocation>
        <location>Cell outer membrane</location>
        <topology>Peripheral membrane protein</topology>
    </subcellularLocation>
    <text evidence="1">Attached to the inner leaflet of the outer membrane.</text>
</comment>
<comment type="domain">
    <text evidence="1">The N-terminal domain does not have lytic activity and probably modulates enzymatic activity. The C-terminal domain is the catalytic active domain.</text>
</comment>
<comment type="similarity">
    <text evidence="1">In the N-terminal section; belongs to the bacterial solute-binding protein 3 family.</text>
</comment>
<comment type="similarity">
    <text evidence="1">In the C-terminal section; belongs to the transglycosylase Slt family.</text>
</comment>
<evidence type="ECO:0000255" key="1">
    <source>
        <dbReference type="HAMAP-Rule" id="MF_02016"/>
    </source>
</evidence>
<evidence type="ECO:0000256" key="2">
    <source>
        <dbReference type="SAM" id="MobiDB-lite"/>
    </source>
</evidence>
<dbReference type="EC" id="4.2.2.n1" evidence="1"/>
<dbReference type="EMBL" id="CP000712">
    <property type="protein sequence ID" value="ABQ77238.1"/>
    <property type="molecule type" value="Genomic_DNA"/>
</dbReference>
<dbReference type="SMR" id="A5VZC8"/>
<dbReference type="CAZy" id="GH23">
    <property type="family name" value="Glycoside Hydrolase Family 23"/>
</dbReference>
<dbReference type="KEGG" id="ppf:Pput_1077"/>
<dbReference type="eggNOG" id="COG4623">
    <property type="taxonomic scope" value="Bacteria"/>
</dbReference>
<dbReference type="HOGENOM" id="CLU_027494_0_1_6"/>
<dbReference type="GO" id="GO:0009279">
    <property type="term" value="C:cell outer membrane"/>
    <property type="evidence" value="ECO:0007669"/>
    <property type="project" value="UniProtKB-SubCell"/>
</dbReference>
<dbReference type="GO" id="GO:0008933">
    <property type="term" value="F:peptidoglycan lytic transglycosylase activity"/>
    <property type="evidence" value="ECO:0007669"/>
    <property type="project" value="UniProtKB-UniRule"/>
</dbReference>
<dbReference type="GO" id="GO:0016998">
    <property type="term" value="P:cell wall macromolecule catabolic process"/>
    <property type="evidence" value="ECO:0007669"/>
    <property type="project" value="UniProtKB-UniRule"/>
</dbReference>
<dbReference type="GO" id="GO:0071555">
    <property type="term" value="P:cell wall organization"/>
    <property type="evidence" value="ECO:0007669"/>
    <property type="project" value="UniProtKB-KW"/>
</dbReference>
<dbReference type="GO" id="GO:0009253">
    <property type="term" value="P:peptidoglycan catabolic process"/>
    <property type="evidence" value="ECO:0007669"/>
    <property type="project" value="TreeGrafter"/>
</dbReference>
<dbReference type="CDD" id="cd13403">
    <property type="entry name" value="MLTF-like"/>
    <property type="match status" value="1"/>
</dbReference>
<dbReference type="CDD" id="cd01009">
    <property type="entry name" value="PBP2_YfhD_N"/>
    <property type="match status" value="1"/>
</dbReference>
<dbReference type="Gene3D" id="1.10.530.10">
    <property type="match status" value="1"/>
</dbReference>
<dbReference type="Gene3D" id="3.40.190.10">
    <property type="entry name" value="Periplasmic binding protein-like II"/>
    <property type="match status" value="2"/>
</dbReference>
<dbReference type="HAMAP" id="MF_02016">
    <property type="entry name" value="MltF"/>
    <property type="match status" value="1"/>
</dbReference>
<dbReference type="InterPro" id="IPR023346">
    <property type="entry name" value="Lysozyme-like_dom_sf"/>
</dbReference>
<dbReference type="InterPro" id="IPR023703">
    <property type="entry name" value="MltF"/>
</dbReference>
<dbReference type="InterPro" id="IPR001638">
    <property type="entry name" value="Solute-binding_3/MltF_N"/>
</dbReference>
<dbReference type="InterPro" id="IPR000189">
    <property type="entry name" value="Transglyc_AS"/>
</dbReference>
<dbReference type="InterPro" id="IPR008258">
    <property type="entry name" value="Transglycosylase_SLT_dom_1"/>
</dbReference>
<dbReference type="NCBIfam" id="NF008112">
    <property type="entry name" value="PRK10859.1"/>
    <property type="match status" value="1"/>
</dbReference>
<dbReference type="PANTHER" id="PTHR35936">
    <property type="entry name" value="MEMBRANE-BOUND LYTIC MUREIN TRANSGLYCOSYLASE F"/>
    <property type="match status" value="1"/>
</dbReference>
<dbReference type="PANTHER" id="PTHR35936:SF32">
    <property type="entry name" value="MEMBRANE-BOUND LYTIC MUREIN TRANSGLYCOSYLASE F"/>
    <property type="match status" value="1"/>
</dbReference>
<dbReference type="Pfam" id="PF00497">
    <property type="entry name" value="SBP_bac_3"/>
    <property type="match status" value="1"/>
</dbReference>
<dbReference type="Pfam" id="PF01464">
    <property type="entry name" value="SLT"/>
    <property type="match status" value="1"/>
</dbReference>
<dbReference type="SMART" id="SM00062">
    <property type="entry name" value="PBPb"/>
    <property type="match status" value="1"/>
</dbReference>
<dbReference type="SUPFAM" id="SSF53955">
    <property type="entry name" value="Lysozyme-like"/>
    <property type="match status" value="1"/>
</dbReference>
<dbReference type="SUPFAM" id="SSF53850">
    <property type="entry name" value="Periplasmic binding protein-like II"/>
    <property type="match status" value="1"/>
</dbReference>
<dbReference type="PROSITE" id="PS00922">
    <property type="entry name" value="TRANSGLYCOSYLASE"/>
    <property type="match status" value="1"/>
</dbReference>
<organism>
    <name type="scientific">Pseudomonas putida (strain ATCC 700007 / DSM 6899 / JCM 31910 / BCRC 17059 / LMG 24140 / F1)</name>
    <dbReference type="NCBI Taxonomy" id="351746"/>
    <lineage>
        <taxon>Bacteria</taxon>
        <taxon>Pseudomonadati</taxon>
        <taxon>Pseudomonadota</taxon>
        <taxon>Gammaproteobacteria</taxon>
        <taxon>Pseudomonadales</taxon>
        <taxon>Pseudomonadaceae</taxon>
        <taxon>Pseudomonas</taxon>
    </lineage>
</organism>
<proteinExistence type="inferred from homology"/>